<accession>B5QXY5</accession>
<sequence>MQKYALHAYPVMALMVATLTGCAWIPAKPLVQGATTAQPIPGPVPVANGSIFQSAQPINYGYQPLFEDRRPRNIGDTLTIVLQENVSASKSSSANASRDGKTSFGFDTVPRYLQGLFGNSRADMEASGGNSFNGKGGANASNTFSGTLTVTVDQVLANGNLHVVGEKQIAINQGTEFIRFSGVVNPRTISGSNSVPSTQVADARIEYVGNGYINEAQNMGWLQRFFLNLSPM</sequence>
<reference key="1">
    <citation type="journal article" date="2008" name="Genome Res.">
        <title>Comparative genome analysis of Salmonella enteritidis PT4 and Salmonella gallinarum 287/91 provides insights into evolutionary and host adaptation pathways.</title>
        <authorList>
            <person name="Thomson N.R."/>
            <person name="Clayton D.J."/>
            <person name="Windhorst D."/>
            <person name="Vernikos G."/>
            <person name="Davidson S."/>
            <person name="Churcher C."/>
            <person name="Quail M.A."/>
            <person name="Stevens M."/>
            <person name="Jones M.A."/>
            <person name="Watson M."/>
            <person name="Barron A."/>
            <person name="Layton A."/>
            <person name="Pickard D."/>
            <person name="Kingsley R.A."/>
            <person name="Bignell A."/>
            <person name="Clark L."/>
            <person name="Harris B."/>
            <person name="Ormond D."/>
            <person name="Abdellah Z."/>
            <person name="Brooks K."/>
            <person name="Cherevach I."/>
            <person name="Chillingworth T."/>
            <person name="Woodward J."/>
            <person name="Norberczak H."/>
            <person name="Lord A."/>
            <person name="Arrowsmith C."/>
            <person name="Jagels K."/>
            <person name="Moule S."/>
            <person name="Mungall K."/>
            <person name="Saunders M."/>
            <person name="Whitehead S."/>
            <person name="Chabalgoity J.A."/>
            <person name="Maskell D."/>
            <person name="Humphreys T."/>
            <person name="Roberts M."/>
            <person name="Barrow P.A."/>
            <person name="Dougan G."/>
            <person name="Parkhill J."/>
        </authorList>
    </citation>
    <scope>NUCLEOTIDE SEQUENCE [LARGE SCALE GENOMIC DNA]</scope>
    <source>
        <strain>P125109</strain>
    </source>
</reference>
<comment type="function">
    <text evidence="1">Assembles around the rod to form the L-ring and probably protects the motor/basal body from shearing forces during rotation.</text>
</comment>
<comment type="subunit">
    <text evidence="1">The basal body constitutes a major portion of the flagellar organelle and consists of four rings (L,P,S, and M) mounted on a central rod.</text>
</comment>
<comment type="subcellular location">
    <subcellularLocation>
        <location evidence="1">Cell outer membrane</location>
        <topology evidence="1">Lipid-anchor</topology>
    </subcellularLocation>
    <subcellularLocation>
        <location evidence="1">Bacterial flagellum basal body</location>
    </subcellularLocation>
</comment>
<comment type="similarity">
    <text evidence="1">Belongs to the FlgH family.</text>
</comment>
<evidence type="ECO:0000255" key="1">
    <source>
        <dbReference type="HAMAP-Rule" id="MF_00415"/>
    </source>
</evidence>
<dbReference type="EMBL" id="AM933172">
    <property type="protein sequence ID" value="CAR33448.1"/>
    <property type="molecule type" value="Genomic_DNA"/>
</dbReference>
<dbReference type="RefSeq" id="WP_001174897.1">
    <property type="nucleotide sequence ID" value="NC_011294.1"/>
</dbReference>
<dbReference type="SMR" id="B5QXY5"/>
<dbReference type="KEGG" id="set:SEN1868"/>
<dbReference type="HOGENOM" id="CLU_069313_0_0_6"/>
<dbReference type="Proteomes" id="UP000000613">
    <property type="component" value="Chromosome"/>
</dbReference>
<dbReference type="GO" id="GO:0009427">
    <property type="term" value="C:bacterial-type flagellum basal body, distal rod, L ring"/>
    <property type="evidence" value="ECO:0007669"/>
    <property type="project" value="InterPro"/>
</dbReference>
<dbReference type="GO" id="GO:0009279">
    <property type="term" value="C:cell outer membrane"/>
    <property type="evidence" value="ECO:0007669"/>
    <property type="project" value="UniProtKB-SubCell"/>
</dbReference>
<dbReference type="GO" id="GO:0003774">
    <property type="term" value="F:cytoskeletal motor activity"/>
    <property type="evidence" value="ECO:0007669"/>
    <property type="project" value="InterPro"/>
</dbReference>
<dbReference type="GO" id="GO:0071973">
    <property type="term" value="P:bacterial-type flagellum-dependent cell motility"/>
    <property type="evidence" value="ECO:0007669"/>
    <property type="project" value="InterPro"/>
</dbReference>
<dbReference type="HAMAP" id="MF_00415">
    <property type="entry name" value="FlgH"/>
    <property type="match status" value="1"/>
</dbReference>
<dbReference type="InterPro" id="IPR000527">
    <property type="entry name" value="Flag_Lring"/>
</dbReference>
<dbReference type="NCBIfam" id="NF001301">
    <property type="entry name" value="PRK00249.1-1"/>
    <property type="match status" value="1"/>
</dbReference>
<dbReference type="PANTHER" id="PTHR34933">
    <property type="entry name" value="FLAGELLAR L-RING PROTEIN"/>
    <property type="match status" value="1"/>
</dbReference>
<dbReference type="PANTHER" id="PTHR34933:SF3">
    <property type="entry name" value="FLAGELLAR L-RING PROTEIN"/>
    <property type="match status" value="1"/>
</dbReference>
<dbReference type="Pfam" id="PF02107">
    <property type="entry name" value="FlgH"/>
    <property type="match status" value="1"/>
</dbReference>
<dbReference type="PRINTS" id="PR01008">
    <property type="entry name" value="FLGLRINGFLGH"/>
</dbReference>
<dbReference type="PROSITE" id="PS51257">
    <property type="entry name" value="PROKAR_LIPOPROTEIN"/>
    <property type="match status" value="1"/>
</dbReference>
<protein>
    <recommendedName>
        <fullName evidence="1">Flagellar L-ring protein</fullName>
    </recommendedName>
    <alternativeName>
        <fullName evidence="1">Basal body L-ring protein</fullName>
    </alternativeName>
</protein>
<keyword id="KW-0975">Bacterial flagellum</keyword>
<keyword id="KW-0998">Cell outer membrane</keyword>
<keyword id="KW-0449">Lipoprotein</keyword>
<keyword id="KW-0472">Membrane</keyword>
<keyword id="KW-0564">Palmitate</keyword>
<keyword id="KW-0732">Signal</keyword>
<gene>
    <name evidence="1" type="primary">flgH</name>
    <name type="ordered locus">SEN1868</name>
</gene>
<name>FLGH_SALEP</name>
<proteinExistence type="inferred from homology"/>
<feature type="signal peptide" evidence="1">
    <location>
        <begin position="1"/>
        <end position="21"/>
    </location>
</feature>
<feature type="chain" id="PRO_1000123956" description="Flagellar L-ring protein">
    <location>
        <begin position="22"/>
        <end position="232"/>
    </location>
</feature>
<feature type="lipid moiety-binding region" description="N-palmitoyl cysteine" evidence="1">
    <location>
        <position position="22"/>
    </location>
</feature>
<feature type="lipid moiety-binding region" description="S-diacylglycerol cysteine" evidence="1">
    <location>
        <position position="22"/>
    </location>
</feature>
<organism>
    <name type="scientific">Salmonella enteritidis PT4 (strain P125109)</name>
    <dbReference type="NCBI Taxonomy" id="550537"/>
    <lineage>
        <taxon>Bacteria</taxon>
        <taxon>Pseudomonadati</taxon>
        <taxon>Pseudomonadota</taxon>
        <taxon>Gammaproteobacteria</taxon>
        <taxon>Enterobacterales</taxon>
        <taxon>Enterobacteriaceae</taxon>
        <taxon>Salmonella</taxon>
    </lineage>
</organism>